<proteinExistence type="inferred from homology"/>
<reference key="1">
    <citation type="journal article" date="2005" name="Nature">
        <title>The map-based sequence of the rice genome.</title>
        <authorList>
            <consortium name="International rice genome sequencing project (IRGSP)"/>
        </authorList>
    </citation>
    <scope>NUCLEOTIDE SEQUENCE [LARGE SCALE GENOMIC DNA]</scope>
    <source>
        <strain>cv. Nipponbare</strain>
    </source>
</reference>
<reference key="2">
    <citation type="journal article" date="2008" name="Nucleic Acids Res.">
        <title>The rice annotation project database (RAP-DB): 2008 update.</title>
        <authorList>
            <consortium name="The rice annotation project (RAP)"/>
        </authorList>
    </citation>
    <scope>GENOME REANNOTATION</scope>
    <source>
        <strain>cv. Nipponbare</strain>
    </source>
</reference>
<reference key="3">
    <citation type="journal article" date="2013" name="Rice">
        <title>Improvement of the Oryza sativa Nipponbare reference genome using next generation sequence and optical map data.</title>
        <authorList>
            <person name="Kawahara Y."/>
            <person name="de la Bastide M."/>
            <person name="Hamilton J.P."/>
            <person name="Kanamori H."/>
            <person name="McCombie W.R."/>
            <person name="Ouyang S."/>
            <person name="Schwartz D.C."/>
            <person name="Tanaka T."/>
            <person name="Wu J."/>
            <person name="Zhou S."/>
            <person name="Childs K.L."/>
            <person name="Davidson R.M."/>
            <person name="Lin H."/>
            <person name="Quesada-Ocampo L."/>
            <person name="Vaillancourt B."/>
            <person name="Sakai H."/>
            <person name="Lee S.S."/>
            <person name="Kim J."/>
            <person name="Numa H."/>
            <person name="Itoh T."/>
            <person name="Buell C.R."/>
            <person name="Matsumoto T."/>
        </authorList>
    </citation>
    <scope>GENOME REANNOTATION</scope>
    <source>
        <strain>cv. Nipponbare</strain>
    </source>
</reference>
<reference key="4">
    <citation type="journal article" date="2005" name="PLoS Biol.">
        <title>The genomes of Oryza sativa: a history of duplications.</title>
        <authorList>
            <person name="Yu J."/>
            <person name="Wang J."/>
            <person name="Lin W."/>
            <person name="Li S."/>
            <person name="Li H."/>
            <person name="Zhou J."/>
            <person name="Ni P."/>
            <person name="Dong W."/>
            <person name="Hu S."/>
            <person name="Zeng C."/>
            <person name="Zhang J."/>
            <person name="Zhang Y."/>
            <person name="Li R."/>
            <person name="Xu Z."/>
            <person name="Li S."/>
            <person name="Li X."/>
            <person name="Zheng H."/>
            <person name="Cong L."/>
            <person name="Lin L."/>
            <person name="Yin J."/>
            <person name="Geng J."/>
            <person name="Li G."/>
            <person name="Shi J."/>
            <person name="Liu J."/>
            <person name="Lv H."/>
            <person name="Li J."/>
            <person name="Wang J."/>
            <person name="Deng Y."/>
            <person name="Ran L."/>
            <person name="Shi X."/>
            <person name="Wang X."/>
            <person name="Wu Q."/>
            <person name="Li C."/>
            <person name="Ren X."/>
            <person name="Wang J."/>
            <person name="Wang X."/>
            <person name="Li D."/>
            <person name="Liu D."/>
            <person name="Zhang X."/>
            <person name="Ji Z."/>
            <person name="Zhao W."/>
            <person name="Sun Y."/>
            <person name="Zhang Z."/>
            <person name="Bao J."/>
            <person name="Han Y."/>
            <person name="Dong L."/>
            <person name="Ji J."/>
            <person name="Chen P."/>
            <person name="Wu S."/>
            <person name="Liu J."/>
            <person name="Xiao Y."/>
            <person name="Bu D."/>
            <person name="Tan J."/>
            <person name="Yang L."/>
            <person name="Ye C."/>
            <person name="Zhang J."/>
            <person name="Xu J."/>
            <person name="Zhou Y."/>
            <person name="Yu Y."/>
            <person name="Zhang B."/>
            <person name="Zhuang S."/>
            <person name="Wei H."/>
            <person name="Liu B."/>
            <person name="Lei M."/>
            <person name="Yu H."/>
            <person name="Li Y."/>
            <person name="Xu H."/>
            <person name="Wei S."/>
            <person name="He X."/>
            <person name="Fang L."/>
            <person name="Zhang Z."/>
            <person name="Zhang Y."/>
            <person name="Huang X."/>
            <person name="Su Z."/>
            <person name="Tong W."/>
            <person name="Li J."/>
            <person name="Tong Z."/>
            <person name="Li S."/>
            <person name="Ye J."/>
            <person name="Wang L."/>
            <person name="Fang L."/>
            <person name="Lei T."/>
            <person name="Chen C.-S."/>
            <person name="Chen H.-C."/>
            <person name="Xu Z."/>
            <person name="Li H."/>
            <person name="Huang H."/>
            <person name="Zhang F."/>
            <person name="Xu H."/>
            <person name="Li N."/>
            <person name="Zhao C."/>
            <person name="Li S."/>
            <person name="Dong L."/>
            <person name="Huang Y."/>
            <person name="Li L."/>
            <person name="Xi Y."/>
            <person name="Qi Q."/>
            <person name="Li W."/>
            <person name="Zhang B."/>
            <person name="Hu W."/>
            <person name="Zhang Y."/>
            <person name="Tian X."/>
            <person name="Jiao Y."/>
            <person name="Liang X."/>
            <person name="Jin J."/>
            <person name="Gao L."/>
            <person name="Zheng W."/>
            <person name="Hao B."/>
            <person name="Liu S.-M."/>
            <person name="Wang W."/>
            <person name="Yuan L."/>
            <person name="Cao M."/>
            <person name="McDermott J."/>
            <person name="Samudrala R."/>
            <person name="Wang J."/>
            <person name="Wong G.K.-S."/>
            <person name="Yang H."/>
        </authorList>
    </citation>
    <scope>NUCLEOTIDE SEQUENCE [LARGE SCALE GENOMIC DNA]</scope>
    <source>
        <strain>cv. Nipponbare</strain>
    </source>
</reference>
<reference key="5">
    <citation type="journal article" date="2007" name="Plant Physiol.">
        <title>Nomenclature for two-component signaling elements of rice.</title>
        <authorList>
            <person name="Schaller G.E."/>
            <person name="Doi K."/>
            <person name="Hwang I."/>
            <person name="Kieber J.J."/>
            <person name="Khurana J.P."/>
            <person name="Kurata N."/>
            <person name="Mizuno T."/>
            <person name="Pareek A."/>
            <person name="Shiu S.H."/>
            <person name="Wu P."/>
            <person name="Yip W.K."/>
        </authorList>
    </citation>
    <scope>GENE FAMILY</scope>
    <scope>NOMENCLATURE</scope>
</reference>
<protein>
    <recommendedName>
        <fullName evidence="5">Two-component response regulator ORR31</fullName>
    </recommendedName>
</protein>
<comment type="function">
    <text evidence="1">Functions as a response regulator involved in His-to-Asp phosphorelay signal transduction system. Phosphorylation of the Asp residue in the receiver domain activates the ability of the protein to promote the transcription of target genes. May directly activate some type-A response regulators in response to cytokinins.</text>
</comment>
<comment type="PTM">
    <text evidence="5">Two-component system major event consists of a His-to-Asp phosphorelay between a sensor histidine kinase (HK) and a response regulator (RR). In plants, the His-to-Asp phosphorelay involves an additional intermediate named Histidine-containing phosphotransfer protein (HPt). This multistep phosphorelay consists of a His-Asp-His-Asp sequential transfer of a phosphate group between first a His and an Asp of the HK protein, followed by the transfer to a conserved His of the HPt protein and finally the transfer to an Asp in the receiver domain of the RR protein.</text>
</comment>
<comment type="similarity">
    <text evidence="5">Belongs to the ARR family. Type-B subfamily.</text>
</comment>
<comment type="sequence caution" evidence="5">
    <conflict type="erroneous gene model prediction">
        <sequence resource="EMBL-CDS" id="BAD09588"/>
    </conflict>
</comment>
<comment type="sequence caution" evidence="5">
    <conflict type="erroneous gene model prediction">
        <sequence resource="EMBL-CDS" id="BAD09589"/>
    </conflict>
</comment>
<comment type="sequence caution" evidence="5">
    <conflict type="erroneous gene model prediction">
        <sequence resource="EMBL-CDS" id="EEE68810"/>
    </conflict>
</comment>
<sequence>MEDQLSFFPGGLRVMPVDGDTKNTRTATKTLSTLHYSLVATHTTASAGLCTLSSDNMTDVQTVLCDVKKVVSSGFDFRRVVETEHHIPVIYLLSTTEPEQMVAGEDTEFLNHLLLKATYIVRKPLDQATMAQLWRVVAWRRCCLEERIPRDSMDDIAAHAGVVGKDGNDNDVIIIEEPQVHFKVVRSRGSRKRQLTINVDSGSSDGADANPRQKLEHKKDAKGPLGQHVASHLQPQEYCTKQQKDLDERRLLSLDSLFLKAILSTLNVSLCNPLILTVPAAFTPQDGMTMNKDKAPMIELPFGLPVDDFLVGQTAYGSAGPSIGAPDDNDDDAAMYAYTSALNNNAAVGSLMVPPIESTFTIIDPIVGTKGEGSVPVVVVSEDQNNAVAAIEATAPNNAELFMMPEQVAVDAPVDVEEGIMFSLESLLGLDEDMIPMEDAGGEATDDSLNIKEGGMEIGWDLDLDYILMNNTNEFAFLDDMAWIE</sequence>
<gene>
    <name evidence="4" type="primary">RR31</name>
    <name evidence="5" type="ordered locus">LOC_Os08g35650</name>
    <name evidence="8" type="ORF">OsJ_27566</name>
    <name evidence="6" type="ORF">P0493A04.18</name>
    <name evidence="7" type="ORF">P0493A04.19</name>
</gene>
<dbReference type="EMBL" id="AP004586">
    <property type="protein sequence ID" value="BAD09588.1"/>
    <property type="status" value="ALT_SEQ"/>
    <property type="molecule type" value="Genomic_DNA"/>
</dbReference>
<dbReference type="EMBL" id="AP004586">
    <property type="protein sequence ID" value="BAD09589.1"/>
    <property type="status" value="ALT_SEQ"/>
    <property type="molecule type" value="Genomic_DNA"/>
</dbReference>
<dbReference type="EMBL" id="AP008214">
    <property type="status" value="NOT_ANNOTATED_CDS"/>
    <property type="molecule type" value="Genomic_DNA"/>
</dbReference>
<dbReference type="EMBL" id="AP014964">
    <property type="status" value="NOT_ANNOTATED_CDS"/>
    <property type="molecule type" value="Genomic_DNA"/>
</dbReference>
<dbReference type="EMBL" id="CM000145">
    <property type="protein sequence ID" value="EEE68810.1"/>
    <property type="status" value="ALT_SEQ"/>
    <property type="molecule type" value="Genomic_DNA"/>
</dbReference>
<dbReference type="SMR" id="B9G193"/>
<dbReference type="FunCoup" id="B9G193">
    <property type="interactions" value="242"/>
</dbReference>
<dbReference type="STRING" id="39947.B9G193"/>
<dbReference type="PaxDb" id="39947-B9G193"/>
<dbReference type="InParanoid" id="B9G193"/>
<dbReference type="Proteomes" id="UP000000763">
    <property type="component" value="Chromosome 8"/>
</dbReference>
<dbReference type="Proteomes" id="UP000007752">
    <property type="component" value="Chromosome 8"/>
</dbReference>
<dbReference type="Proteomes" id="UP000059680">
    <property type="component" value="Chromosome 8"/>
</dbReference>
<dbReference type="GO" id="GO:0009736">
    <property type="term" value="P:cytokinin-activated signaling pathway"/>
    <property type="evidence" value="ECO:0007669"/>
    <property type="project" value="UniProtKB-KW"/>
</dbReference>
<dbReference type="GO" id="GO:0000160">
    <property type="term" value="P:phosphorelay signal transduction system"/>
    <property type="evidence" value="ECO:0007669"/>
    <property type="project" value="UniProtKB-KW"/>
</dbReference>
<dbReference type="Gene3D" id="3.40.50.2300">
    <property type="match status" value="1"/>
</dbReference>
<dbReference type="InterPro" id="IPR045279">
    <property type="entry name" value="ARR-like"/>
</dbReference>
<dbReference type="InterPro" id="IPR011006">
    <property type="entry name" value="CheY-like_superfamily"/>
</dbReference>
<dbReference type="InterPro" id="IPR001789">
    <property type="entry name" value="Sig_transdc_resp-reg_receiver"/>
</dbReference>
<dbReference type="PANTHER" id="PTHR43874">
    <property type="entry name" value="TWO-COMPONENT RESPONSE REGULATOR"/>
    <property type="match status" value="1"/>
</dbReference>
<dbReference type="PANTHER" id="PTHR43874:SF123">
    <property type="entry name" value="TWO-COMPONENT RESPONSE REGULATOR ARR14"/>
    <property type="match status" value="1"/>
</dbReference>
<dbReference type="SUPFAM" id="SSF52172">
    <property type="entry name" value="CheY-like"/>
    <property type="match status" value="1"/>
</dbReference>
<dbReference type="PROSITE" id="PS50110">
    <property type="entry name" value="RESPONSE_REGULATORY"/>
    <property type="match status" value="1"/>
</dbReference>
<keyword id="KW-0010">Activator</keyword>
<keyword id="KW-0932">Cytokinin signaling pathway</keyword>
<keyword id="KW-0597">Phosphoprotein</keyword>
<keyword id="KW-1185">Reference proteome</keyword>
<keyword id="KW-0902">Two-component regulatory system</keyword>
<organism>
    <name type="scientific">Oryza sativa subsp. japonica</name>
    <name type="common">Rice</name>
    <dbReference type="NCBI Taxonomy" id="39947"/>
    <lineage>
        <taxon>Eukaryota</taxon>
        <taxon>Viridiplantae</taxon>
        <taxon>Streptophyta</taxon>
        <taxon>Embryophyta</taxon>
        <taxon>Tracheophyta</taxon>
        <taxon>Spermatophyta</taxon>
        <taxon>Magnoliopsida</taxon>
        <taxon>Liliopsida</taxon>
        <taxon>Poales</taxon>
        <taxon>Poaceae</taxon>
        <taxon>BOP clade</taxon>
        <taxon>Oryzoideae</taxon>
        <taxon>Oryzeae</taxon>
        <taxon>Oryzinae</taxon>
        <taxon>Oryza</taxon>
        <taxon>Oryza sativa</taxon>
    </lineage>
</organism>
<accession>B9G193</accession>
<accession>Q6ZC06</accession>
<accession>Q6ZC07</accession>
<feature type="chain" id="PRO_0000433855" description="Two-component response regulator ORR31">
    <location>
        <begin position="1"/>
        <end position="485"/>
    </location>
</feature>
<feature type="domain" description="Response regulatory" evidence="2">
    <location>
        <begin position="13"/>
        <end position="138"/>
    </location>
</feature>
<feature type="region of interest" description="Disordered" evidence="3">
    <location>
        <begin position="195"/>
        <end position="236"/>
    </location>
</feature>
<feature type="compositionally biased region" description="Polar residues" evidence="3">
    <location>
        <begin position="195"/>
        <end position="204"/>
    </location>
</feature>
<feature type="compositionally biased region" description="Basic and acidic residues" evidence="3">
    <location>
        <begin position="211"/>
        <end position="222"/>
    </location>
</feature>
<feature type="modified residue" description="4-aspartylphosphate" evidence="2">
    <location>
        <position position="66"/>
    </location>
</feature>
<evidence type="ECO:0000250" key="1">
    <source>
        <dbReference type="UniProtKB" id="Q940D0"/>
    </source>
</evidence>
<evidence type="ECO:0000255" key="2">
    <source>
        <dbReference type="PROSITE-ProRule" id="PRU00169"/>
    </source>
</evidence>
<evidence type="ECO:0000256" key="3">
    <source>
        <dbReference type="SAM" id="MobiDB-lite"/>
    </source>
</evidence>
<evidence type="ECO:0000303" key="4">
    <source>
    </source>
</evidence>
<evidence type="ECO:0000305" key="5"/>
<evidence type="ECO:0000312" key="6">
    <source>
        <dbReference type="EMBL" id="BAD09588.1"/>
    </source>
</evidence>
<evidence type="ECO:0000312" key="7">
    <source>
        <dbReference type="EMBL" id="BAD09589.1"/>
    </source>
</evidence>
<evidence type="ECO:0000312" key="8">
    <source>
        <dbReference type="EMBL" id="EEE68810.1"/>
    </source>
</evidence>
<name>ORR31_ORYSJ</name>